<dbReference type="EC" id="2.7.7.6" evidence="1"/>
<dbReference type="EMBL" id="AP006628">
    <property type="protein sequence ID" value="BAD04345.1"/>
    <property type="molecule type" value="Genomic_DNA"/>
</dbReference>
<dbReference type="SMR" id="Q6YQW3"/>
<dbReference type="STRING" id="262768.PAM_260"/>
<dbReference type="KEGG" id="poy:PAM_260"/>
<dbReference type="eggNOG" id="COG0085">
    <property type="taxonomic scope" value="Bacteria"/>
</dbReference>
<dbReference type="HOGENOM" id="CLU_000524_4_1_14"/>
<dbReference type="BioCyc" id="OYEL262768:G1G26-317-MONOMER"/>
<dbReference type="BRENDA" id="2.7.7.6">
    <property type="organism ID" value="14812"/>
</dbReference>
<dbReference type="Proteomes" id="UP000002523">
    <property type="component" value="Chromosome"/>
</dbReference>
<dbReference type="GO" id="GO:0000428">
    <property type="term" value="C:DNA-directed RNA polymerase complex"/>
    <property type="evidence" value="ECO:0007669"/>
    <property type="project" value="UniProtKB-KW"/>
</dbReference>
<dbReference type="GO" id="GO:0003677">
    <property type="term" value="F:DNA binding"/>
    <property type="evidence" value="ECO:0007669"/>
    <property type="project" value="UniProtKB-UniRule"/>
</dbReference>
<dbReference type="GO" id="GO:0003899">
    <property type="term" value="F:DNA-directed RNA polymerase activity"/>
    <property type="evidence" value="ECO:0007669"/>
    <property type="project" value="UniProtKB-UniRule"/>
</dbReference>
<dbReference type="GO" id="GO:0032549">
    <property type="term" value="F:ribonucleoside binding"/>
    <property type="evidence" value="ECO:0007669"/>
    <property type="project" value="InterPro"/>
</dbReference>
<dbReference type="GO" id="GO:0006351">
    <property type="term" value="P:DNA-templated transcription"/>
    <property type="evidence" value="ECO:0007669"/>
    <property type="project" value="UniProtKB-UniRule"/>
</dbReference>
<dbReference type="CDD" id="cd00653">
    <property type="entry name" value="RNA_pol_B_RPB2"/>
    <property type="match status" value="1"/>
</dbReference>
<dbReference type="Gene3D" id="2.40.50.100">
    <property type="match status" value="1"/>
</dbReference>
<dbReference type="Gene3D" id="2.40.50.150">
    <property type="match status" value="1"/>
</dbReference>
<dbReference type="Gene3D" id="3.90.1100.10">
    <property type="match status" value="2"/>
</dbReference>
<dbReference type="Gene3D" id="2.30.150.10">
    <property type="entry name" value="DNA-directed RNA polymerase, beta subunit, external 1 domain"/>
    <property type="match status" value="1"/>
</dbReference>
<dbReference type="Gene3D" id="2.40.270.10">
    <property type="entry name" value="DNA-directed RNA polymerase, subunit 2, domain 6"/>
    <property type="match status" value="2"/>
</dbReference>
<dbReference type="Gene3D" id="3.90.1800.10">
    <property type="entry name" value="RNA polymerase alpha subunit dimerisation domain"/>
    <property type="match status" value="1"/>
</dbReference>
<dbReference type="Gene3D" id="3.90.1110.10">
    <property type="entry name" value="RNA polymerase Rpb2, domain 2"/>
    <property type="match status" value="2"/>
</dbReference>
<dbReference type="HAMAP" id="MF_01321">
    <property type="entry name" value="RNApol_bact_RpoB"/>
    <property type="match status" value="1"/>
</dbReference>
<dbReference type="InterPro" id="IPR042107">
    <property type="entry name" value="DNA-dir_RNA_pol_bsu_ext_1_sf"/>
</dbReference>
<dbReference type="InterPro" id="IPR019462">
    <property type="entry name" value="DNA-dir_RNA_pol_bsu_external_1"/>
</dbReference>
<dbReference type="InterPro" id="IPR015712">
    <property type="entry name" value="DNA-dir_RNA_pol_su2"/>
</dbReference>
<dbReference type="InterPro" id="IPR007120">
    <property type="entry name" value="DNA-dir_RNAP_su2_dom"/>
</dbReference>
<dbReference type="InterPro" id="IPR037033">
    <property type="entry name" value="DNA-dir_RNAP_su2_hyb_sf"/>
</dbReference>
<dbReference type="InterPro" id="IPR010243">
    <property type="entry name" value="RNA_pol_bsu_bac"/>
</dbReference>
<dbReference type="InterPro" id="IPR007121">
    <property type="entry name" value="RNA_pol_bsu_CS"/>
</dbReference>
<dbReference type="InterPro" id="IPR007644">
    <property type="entry name" value="RNA_pol_bsu_protrusion"/>
</dbReference>
<dbReference type="InterPro" id="IPR007642">
    <property type="entry name" value="RNA_pol_Rpb2_2"/>
</dbReference>
<dbReference type="InterPro" id="IPR037034">
    <property type="entry name" value="RNA_pol_Rpb2_2_sf"/>
</dbReference>
<dbReference type="InterPro" id="IPR007645">
    <property type="entry name" value="RNA_pol_Rpb2_3"/>
</dbReference>
<dbReference type="InterPro" id="IPR007641">
    <property type="entry name" value="RNA_pol_Rpb2_7"/>
</dbReference>
<dbReference type="InterPro" id="IPR014724">
    <property type="entry name" value="RNA_pol_RPB2_OB-fold"/>
</dbReference>
<dbReference type="NCBIfam" id="NF001616">
    <property type="entry name" value="PRK00405.1"/>
    <property type="match status" value="1"/>
</dbReference>
<dbReference type="NCBIfam" id="TIGR02013">
    <property type="entry name" value="rpoB"/>
    <property type="match status" value="1"/>
</dbReference>
<dbReference type="PANTHER" id="PTHR20856">
    <property type="entry name" value="DNA-DIRECTED RNA POLYMERASE I SUBUNIT 2"/>
    <property type="match status" value="1"/>
</dbReference>
<dbReference type="Pfam" id="PF04563">
    <property type="entry name" value="RNA_pol_Rpb2_1"/>
    <property type="match status" value="1"/>
</dbReference>
<dbReference type="Pfam" id="PF04561">
    <property type="entry name" value="RNA_pol_Rpb2_2"/>
    <property type="match status" value="2"/>
</dbReference>
<dbReference type="Pfam" id="PF04565">
    <property type="entry name" value="RNA_pol_Rpb2_3"/>
    <property type="match status" value="1"/>
</dbReference>
<dbReference type="Pfam" id="PF10385">
    <property type="entry name" value="RNA_pol_Rpb2_45"/>
    <property type="match status" value="1"/>
</dbReference>
<dbReference type="Pfam" id="PF00562">
    <property type="entry name" value="RNA_pol_Rpb2_6"/>
    <property type="match status" value="1"/>
</dbReference>
<dbReference type="Pfam" id="PF04560">
    <property type="entry name" value="RNA_pol_Rpb2_7"/>
    <property type="match status" value="1"/>
</dbReference>
<dbReference type="SUPFAM" id="SSF64484">
    <property type="entry name" value="beta and beta-prime subunits of DNA dependent RNA-polymerase"/>
    <property type="match status" value="1"/>
</dbReference>
<dbReference type="PROSITE" id="PS01166">
    <property type="entry name" value="RNA_POL_BETA"/>
    <property type="match status" value="1"/>
</dbReference>
<organism>
    <name type="scientific">Onion yellows phytoplasma (strain OY-M)</name>
    <dbReference type="NCBI Taxonomy" id="262768"/>
    <lineage>
        <taxon>Bacteria</taxon>
        <taxon>Bacillati</taxon>
        <taxon>Mycoplasmatota</taxon>
        <taxon>Mollicutes</taxon>
        <taxon>Acholeplasmatales</taxon>
        <taxon>Acholeplasmataceae</taxon>
        <taxon>Candidatus Phytoplasma</taxon>
        <taxon>16SrI (Aster yellows group)</taxon>
    </lineage>
</organism>
<feature type="chain" id="PRO_0000224086" description="DNA-directed RNA polymerase subunit beta">
    <location>
        <begin position="1"/>
        <end position="1273"/>
    </location>
</feature>
<comment type="function">
    <text evidence="1">DNA-dependent RNA polymerase catalyzes the transcription of DNA into RNA using the four ribonucleoside triphosphates as substrates.</text>
</comment>
<comment type="catalytic activity">
    <reaction evidence="1">
        <text>RNA(n) + a ribonucleoside 5'-triphosphate = RNA(n+1) + diphosphate</text>
        <dbReference type="Rhea" id="RHEA:21248"/>
        <dbReference type="Rhea" id="RHEA-COMP:14527"/>
        <dbReference type="Rhea" id="RHEA-COMP:17342"/>
        <dbReference type="ChEBI" id="CHEBI:33019"/>
        <dbReference type="ChEBI" id="CHEBI:61557"/>
        <dbReference type="ChEBI" id="CHEBI:140395"/>
        <dbReference type="EC" id="2.7.7.6"/>
    </reaction>
</comment>
<comment type="subunit">
    <text evidence="1">The RNAP catalytic core consists of 2 alpha, 1 beta, 1 beta' and 1 omega subunit. When a sigma factor is associated with the core the holoenzyme is formed, which can initiate transcription.</text>
</comment>
<comment type="similarity">
    <text evidence="1">Belongs to the RNA polymerase beta chain family.</text>
</comment>
<protein>
    <recommendedName>
        <fullName evidence="1">DNA-directed RNA polymerase subunit beta</fullName>
        <shortName evidence="1">RNAP subunit beta</shortName>
        <ecNumber evidence="1">2.7.7.6</ecNumber>
    </recommendedName>
    <alternativeName>
        <fullName evidence="1">RNA polymerase subunit beta</fullName>
    </alternativeName>
    <alternativeName>
        <fullName evidence="1">Transcriptase subunit beta</fullName>
    </alternativeName>
</protein>
<gene>
    <name evidence="1" type="primary">rpoB</name>
    <name type="ordered locus">PAM_260</name>
</gene>
<reference key="1">
    <citation type="journal article" date="2004" name="Nat. Genet.">
        <title>Reductive evolution suggested from the complete genome sequence of a plant-pathogenic phytoplasma.</title>
        <authorList>
            <person name="Oshima K."/>
            <person name="Kakizawa S."/>
            <person name="Nishigawa H."/>
            <person name="Jung H.-Y."/>
            <person name="Wei W."/>
            <person name="Suzuki S."/>
            <person name="Arashida R."/>
            <person name="Nakata D."/>
            <person name="Miyata S."/>
            <person name="Ugaki M."/>
            <person name="Namba S."/>
        </authorList>
    </citation>
    <scope>NUCLEOTIDE SEQUENCE [LARGE SCALE GENOMIC DNA]</scope>
    <source>
        <strain>OY-M</strain>
    </source>
</reference>
<accession>Q6YQW3</accession>
<sequence length="1273" mass="143378">MGYHNVKYGKKAQRRNYSKTIYDVDLPNLIEIQNQSFDWFLKHGIKELLQDFCPIESYNGDLKIHFDDYFLAPPKYSIEETKIKDISYVAQLFVKTTLENVLTGETKQSNILLTELPLMTPTGTFVINGTERVVVSQIVRSASVYFAGNFDSKLNRTTYSGQVIPSRGAWIEYEEGSKEILYAKLDRSKKIPLSNFIYALGFDSKEAIENVFGKSAIIDSVFDKETDMDSDNALVELYSKIRQGEKVPVDTARDFIRTRLFDQKKYDLAKVGRYKFNKKLDVLTRAENTYLACDFVNPETQEIIIAQDELLTKEKIAILKQNRHFLLQEIFDAKHNLENETDEEILAYKKDPQKNELFTKTNIINSRTGEVLVAKDTLVNDDIINHLRHNIHTLDEKVSKFFLGTKDIYQKEADRQGVFNEILEVYTSKDESGKLYHKVKLIGNDQRETKKHITLSDVIASINYYLNLYENVGTVDDIDHLGNRRLRLIGELLKNQFRIGLTRAEKNIKDMISTSKFSEVNGPGDLVNFTFLMSVIKTFFTSSRLSQFMDQINPLAELTQKRRVSALGIGGINRDRAGIEVRDVHNSHYGRLCPIETPEGPSIGLITSLSTYAKVNKYGFIQTPFFKVLHQDGKTTLSRHIDYLTADQEKEEIIASAGFVLDANNAFKDKKIIARSNGETGIFERSQITYADVSPKQIVSVATSSIPFLEHNDASRALMGANMQRQAVPLLIPESPIVGTGVEYRAAKDSGCLIIARESGFVTYVDAQKIIITKKPNQNVSLNGKTLYDTTQEFTYAQAKALYENNYKEHQAEYTLINFAKSNQDTLVLQKPIVVLGEQINEGDILVSGPSTSQGELALGRNVTVAFMTWEGYNYEDAIIMSEELVKHDVYTSIHIDKYEVQTRELKKGSGQEEITREVPNVGADAIKNLDERGIIIPGSEVKEGDILVGKITPQGNIEPSPSEKLIQIVIGEKAREYKDSSLRVPFGEGGIVQSVHYFSRKNGDVLPAGVNENIRVFIAKKRKINEGDKMAGRHGNKGVISRILPKEDLPYMADGTPIDIMLNPLGVPSRMNIGQILEIHLGMAAKKLGIKVATPVFDGVNDYDLKEIMKEANLDPDGKMVLYDGRTGEPYDSRISVGVMYMVKLSHMVDDKLHARNVGPYTLVTQQPMGGKVQNGGQRFGEMEVWALYAYGAAHTLQEILTVKSDDIVGRNKTYSAIVQGTPLPKPSIPESFRVFIKELQSLGLYVELIKTDTKENEVNKSLIDYKKEGYN</sequence>
<proteinExistence type="inferred from homology"/>
<name>RPOB_ONYPE</name>
<evidence type="ECO:0000255" key="1">
    <source>
        <dbReference type="HAMAP-Rule" id="MF_01321"/>
    </source>
</evidence>
<keyword id="KW-0240">DNA-directed RNA polymerase</keyword>
<keyword id="KW-0548">Nucleotidyltransferase</keyword>
<keyword id="KW-0804">Transcription</keyword>
<keyword id="KW-0808">Transferase</keyword>